<keyword id="KW-0067">ATP-binding</keyword>
<keyword id="KW-0131">Cell cycle</keyword>
<keyword id="KW-0132">Cell division</keyword>
<keyword id="KW-1003">Cell membrane</keyword>
<keyword id="KW-0963">Cytoplasm</keyword>
<keyword id="KW-0418">Kinase</keyword>
<keyword id="KW-0472">Membrane</keyword>
<keyword id="KW-0547">Nucleotide-binding</keyword>
<keyword id="KW-0539">Nucleus</keyword>
<keyword id="KW-0597">Phosphoprotein</keyword>
<keyword id="KW-0723">Serine/threonine-protein kinase</keyword>
<keyword id="KW-0808">Transferase</keyword>
<keyword id="KW-0879">Wnt signaling pathway</keyword>
<feature type="chain" id="PRO_0000391900" description="Cyclin-dependent kinase 14">
    <location>
        <begin position="1"/>
        <end position="468"/>
    </location>
</feature>
<feature type="domain" description="Protein kinase" evidence="3">
    <location>
        <begin position="134"/>
        <end position="418"/>
    </location>
</feature>
<feature type="region of interest" description="Disordered" evidence="5">
    <location>
        <begin position="103"/>
        <end position="132"/>
    </location>
</feature>
<feature type="region of interest" description="Disordered" evidence="5">
    <location>
        <begin position="448"/>
        <end position="468"/>
    </location>
</feature>
<feature type="compositionally biased region" description="Polar residues" evidence="5">
    <location>
        <begin position="455"/>
        <end position="468"/>
    </location>
</feature>
<feature type="active site" description="Proton acceptor" evidence="3 4">
    <location>
        <position position="255"/>
    </location>
</feature>
<feature type="binding site" evidence="3">
    <location>
        <begin position="140"/>
        <end position="148"/>
    </location>
    <ligand>
        <name>ATP</name>
        <dbReference type="ChEBI" id="CHEBI:30616"/>
    </ligand>
</feature>
<feature type="binding site" evidence="3">
    <location>
        <position position="163"/>
    </location>
    <ligand>
        <name>ATP</name>
        <dbReference type="ChEBI" id="CHEBI:30616"/>
    </ligand>
</feature>
<feature type="modified residue" description="Phosphoserine" evidence="2">
    <location>
        <position position="24"/>
    </location>
</feature>
<feature type="modified residue" description="Phosphoserine" evidence="2">
    <location>
        <position position="77"/>
    </location>
</feature>
<feature type="modified residue" description="Phosphoserine" evidence="2">
    <location>
        <position position="94"/>
    </location>
</feature>
<feature type="modified residue" description="Phosphoserine" evidence="2">
    <location>
        <position position="133"/>
    </location>
</feature>
<protein>
    <recommendedName>
        <fullName>Cyclin-dependent kinase 14</fullName>
        <ecNumber>2.7.11.22</ecNumber>
    </recommendedName>
    <alternativeName>
        <fullName>Cell division protein kinase 14</fullName>
    </alternativeName>
</protein>
<reference key="1">
    <citation type="submission" date="2006-09" db="EMBL/GenBank/DDBJ databases">
        <title>NISC comparative sequencing initiative.</title>
        <authorList>
            <person name="Antonellis A."/>
            <person name="Ayele K."/>
            <person name="Benjamin B."/>
            <person name="Blakesley R.W."/>
            <person name="Boakye A."/>
            <person name="Bouffard G.G."/>
            <person name="Brinkley C."/>
            <person name="Brooks S."/>
            <person name="Chu G."/>
            <person name="Coleman H."/>
            <person name="Engle J."/>
            <person name="Gestole M."/>
            <person name="Greene A."/>
            <person name="Guan X."/>
            <person name="Gupta J."/>
            <person name="Haghighi P."/>
            <person name="Han J."/>
            <person name="Hansen N."/>
            <person name="Ho S.-L."/>
            <person name="Hu P."/>
            <person name="Hunter G."/>
            <person name="Hurle B."/>
            <person name="Idol J.R."/>
            <person name="Kwong P."/>
            <person name="Laric P."/>
            <person name="Larson S."/>
            <person name="Lee-Lin S.-Q."/>
            <person name="Legaspi R."/>
            <person name="Madden M."/>
            <person name="Maduro Q.L."/>
            <person name="Maduro V.B."/>
            <person name="Margulies E.H."/>
            <person name="Masiello C."/>
            <person name="Maskeri B."/>
            <person name="McDowell J."/>
            <person name="Mojidi H.A."/>
            <person name="Mullikin J.C."/>
            <person name="Oestreicher J.S."/>
            <person name="Park M."/>
            <person name="Portnoy M.E."/>
            <person name="Prasad A."/>
            <person name="Puri O."/>
            <person name="Reddix-Dugue N."/>
            <person name="Schandler K."/>
            <person name="Schueler M.G."/>
            <person name="Sison C."/>
            <person name="Stantripop S."/>
            <person name="Stephen E."/>
            <person name="Taye A."/>
            <person name="Thomas J.W."/>
            <person name="Thomas P.J."/>
            <person name="Tsipouri V."/>
            <person name="Ung L."/>
            <person name="Vogt J.L."/>
            <person name="Wetherby K.D."/>
            <person name="Young A."/>
            <person name="Green E.D."/>
        </authorList>
    </citation>
    <scope>NUCLEOTIDE SEQUENCE [LARGE SCALE GENOMIC DNA]</scope>
</reference>
<name>CDK14_DASNO</name>
<organism>
    <name type="scientific">Dasypus novemcinctus</name>
    <name type="common">Nine-banded armadillo</name>
    <dbReference type="NCBI Taxonomy" id="9361"/>
    <lineage>
        <taxon>Eukaryota</taxon>
        <taxon>Metazoa</taxon>
        <taxon>Chordata</taxon>
        <taxon>Craniata</taxon>
        <taxon>Vertebrata</taxon>
        <taxon>Euteleostomi</taxon>
        <taxon>Mammalia</taxon>
        <taxon>Eutheria</taxon>
        <taxon>Xenarthra</taxon>
        <taxon>Cingulata</taxon>
        <taxon>Dasypodidae</taxon>
        <taxon>Dasypus</taxon>
    </lineage>
</organism>
<comment type="function">
    <text evidence="1">Serine/threonine-protein kinase involved in the control of the eukaryotic cell cycle, whose activity is controlled by an associated cyclin. Acts as a cell-cycle regulator of Wnt signaling pathway during G2/M phase by mediating the phosphorylation of LRP6 at 'Ser-1490', leading to the activation of the Wnt signaling pathway. Acts as a regulator of cell cycle progression and cell proliferation via its interaction with CCDN3. Phosphorylates RB1 in vitro, however the relevance of such result remains to be confirmed in vivo. May also play a role in meiosis, neuron differentiation and may indirectly act as a negative regulator of insulin-responsive glucose transport (By similarity).</text>
</comment>
<comment type="catalytic activity">
    <reaction>
        <text>L-seryl-[protein] + ATP = O-phospho-L-seryl-[protein] + ADP + H(+)</text>
        <dbReference type="Rhea" id="RHEA:17989"/>
        <dbReference type="Rhea" id="RHEA-COMP:9863"/>
        <dbReference type="Rhea" id="RHEA-COMP:11604"/>
        <dbReference type="ChEBI" id="CHEBI:15378"/>
        <dbReference type="ChEBI" id="CHEBI:29999"/>
        <dbReference type="ChEBI" id="CHEBI:30616"/>
        <dbReference type="ChEBI" id="CHEBI:83421"/>
        <dbReference type="ChEBI" id="CHEBI:456216"/>
        <dbReference type="EC" id="2.7.11.22"/>
    </reaction>
</comment>
<comment type="catalytic activity">
    <reaction>
        <text>L-threonyl-[protein] + ATP = O-phospho-L-threonyl-[protein] + ADP + H(+)</text>
        <dbReference type="Rhea" id="RHEA:46608"/>
        <dbReference type="Rhea" id="RHEA-COMP:11060"/>
        <dbReference type="Rhea" id="RHEA-COMP:11605"/>
        <dbReference type="ChEBI" id="CHEBI:15378"/>
        <dbReference type="ChEBI" id="CHEBI:30013"/>
        <dbReference type="ChEBI" id="CHEBI:30616"/>
        <dbReference type="ChEBI" id="CHEBI:61977"/>
        <dbReference type="ChEBI" id="CHEBI:456216"/>
        <dbReference type="EC" id="2.7.11.22"/>
    </reaction>
</comment>
<comment type="activity regulation">
    <text evidence="1">Serine/threonine-protein kinase activity is promoted by associated cyclins CCDN3 and CCNY and repressed by CDKN1A.</text>
</comment>
<comment type="subunit">
    <text evidence="2">Found in a complex with LRP6, CCNY and CAPRIN2 during G2/M stage; CAPRIN2 functions as a scaffold for the complex by binding to CCNY via its N terminus and to CDK14 via its C terminus. Interacts with CCNY; CCNY mediates its recruitment to the plasma membrane and promotes phosphorylation of LRP6. Interacts with CCDN3 and CDKN1A. Interacts with SEPT8. Interacts with 14-3-3 proteina YWHAB, YWHAE, YWHAH and YWHAQ.</text>
</comment>
<comment type="subcellular location">
    <subcellularLocation>
        <location evidence="1">Cell membrane</location>
        <topology evidence="1">Peripheral membrane protein</topology>
    </subcellularLocation>
    <subcellularLocation>
        <location evidence="1">Cytoplasm</location>
    </subcellularLocation>
    <subcellularLocation>
        <location evidence="1">Nucleus</location>
    </subcellularLocation>
    <text evidence="1">Recruited to the cell membrane by CCNY.</text>
</comment>
<comment type="similarity">
    <text evidence="6">Belongs to the protein kinase superfamily. CMGC Ser/Thr protein kinase family. CDC2/CDKX subfamily.</text>
</comment>
<evidence type="ECO:0000250" key="1"/>
<evidence type="ECO:0000250" key="2">
    <source>
        <dbReference type="UniProtKB" id="O94921"/>
    </source>
</evidence>
<evidence type="ECO:0000255" key="3">
    <source>
        <dbReference type="PROSITE-ProRule" id="PRU00159"/>
    </source>
</evidence>
<evidence type="ECO:0000255" key="4">
    <source>
        <dbReference type="PROSITE-ProRule" id="PRU10027"/>
    </source>
</evidence>
<evidence type="ECO:0000256" key="5">
    <source>
        <dbReference type="SAM" id="MobiDB-lite"/>
    </source>
</evidence>
<evidence type="ECO:0000305" key="6"/>
<gene>
    <name type="primary">CDK14</name>
    <name type="synonym">PFTK1</name>
</gene>
<dbReference type="EC" id="2.7.11.22"/>
<dbReference type="EMBL" id="DP001073">
    <property type="protein sequence ID" value="ACN22218.1"/>
    <property type="molecule type" value="Genomic_DNA"/>
</dbReference>
<dbReference type="RefSeq" id="XP_004457694.2">
    <property type="nucleotide sequence ID" value="XM_004457637.4"/>
</dbReference>
<dbReference type="SMR" id="C0RW22"/>
<dbReference type="GeneID" id="101424147"/>
<dbReference type="HOGENOM" id="CLU_000288_181_6_1"/>
<dbReference type="GO" id="GO:0000308">
    <property type="term" value="C:cytoplasmic cyclin-dependent protein kinase holoenzyme complex"/>
    <property type="evidence" value="ECO:0000250"/>
    <property type="project" value="UniProtKB"/>
</dbReference>
<dbReference type="GO" id="GO:0005829">
    <property type="term" value="C:cytosol"/>
    <property type="evidence" value="ECO:0007669"/>
    <property type="project" value="TreeGrafter"/>
</dbReference>
<dbReference type="GO" id="GO:0005634">
    <property type="term" value="C:nucleus"/>
    <property type="evidence" value="ECO:0007669"/>
    <property type="project" value="UniProtKB-SubCell"/>
</dbReference>
<dbReference type="GO" id="GO:0005886">
    <property type="term" value="C:plasma membrane"/>
    <property type="evidence" value="ECO:0000250"/>
    <property type="project" value="UniProtKB"/>
</dbReference>
<dbReference type="GO" id="GO:0005524">
    <property type="term" value="F:ATP binding"/>
    <property type="evidence" value="ECO:0007669"/>
    <property type="project" value="UniProtKB-KW"/>
</dbReference>
<dbReference type="GO" id="GO:0030332">
    <property type="term" value="F:cyclin binding"/>
    <property type="evidence" value="ECO:0007669"/>
    <property type="project" value="TreeGrafter"/>
</dbReference>
<dbReference type="GO" id="GO:0004693">
    <property type="term" value="F:cyclin-dependent protein serine/threonine kinase activity"/>
    <property type="evidence" value="ECO:0000250"/>
    <property type="project" value="UniProtKB"/>
</dbReference>
<dbReference type="GO" id="GO:0106310">
    <property type="term" value="F:protein serine kinase activity"/>
    <property type="evidence" value="ECO:0007669"/>
    <property type="project" value="RHEA"/>
</dbReference>
<dbReference type="GO" id="GO:0051301">
    <property type="term" value="P:cell division"/>
    <property type="evidence" value="ECO:0007669"/>
    <property type="project" value="UniProtKB-KW"/>
</dbReference>
<dbReference type="GO" id="GO:0000086">
    <property type="term" value="P:G2/M transition of mitotic cell cycle"/>
    <property type="evidence" value="ECO:0000250"/>
    <property type="project" value="UniProtKB"/>
</dbReference>
<dbReference type="GO" id="GO:0060828">
    <property type="term" value="P:regulation of canonical Wnt signaling pathway"/>
    <property type="evidence" value="ECO:0000250"/>
    <property type="project" value="UniProtKB"/>
</dbReference>
<dbReference type="GO" id="GO:0016055">
    <property type="term" value="P:Wnt signaling pathway"/>
    <property type="evidence" value="ECO:0007669"/>
    <property type="project" value="UniProtKB-KW"/>
</dbReference>
<dbReference type="CDD" id="cd07869">
    <property type="entry name" value="STKc_PFTAIRE1"/>
    <property type="match status" value="1"/>
</dbReference>
<dbReference type="FunFam" id="1.10.510.10:FF:000131">
    <property type="entry name" value="cyclin-dependent kinase 14 isoform X1"/>
    <property type="match status" value="1"/>
</dbReference>
<dbReference type="FunFam" id="3.30.200.20:FF:000007">
    <property type="entry name" value="Cyclin-dependent kinase 14, putative"/>
    <property type="match status" value="1"/>
</dbReference>
<dbReference type="Gene3D" id="3.30.200.20">
    <property type="entry name" value="Phosphorylase Kinase, domain 1"/>
    <property type="match status" value="1"/>
</dbReference>
<dbReference type="Gene3D" id="1.10.510.10">
    <property type="entry name" value="Transferase(Phosphotransferase) domain 1"/>
    <property type="match status" value="1"/>
</dbReference>
<dbReference type="InterPro" id="IPR050108">
    <property type="entry name" value="CDK"/>
</dbReference>
<dbReference type="InterPro" id="IPR011009">
    <property type="entry name" value="Kinase-like_dom_sf"/>
</dbReference>
<dbReference type="InterPro" id="IPR000719">
    <property type="entry name" value="Prot_kinase_dom"/>
</dbReference>
<dbReference type="InterPro" id="IPR017441">
    <property type="entry name" value="Protein_kinase_ATP_BS"/>
</dbReference>
<dbReference type="InterPro" id="IPR008271">
    <property type="entry name" value="Ser/Thr_kinase_AS"/>
</dbReference>
<dbReference type="PANTHER" id="PTHR24056">
    <property type="entry name" value="CELL DIVISION PROTEIN KINASE"/>
    <property type="match status" value="1"/>
</dbReference>
<dbReference type="PANTHER" id="PTHR24056:SF154">
    <property type="entry name" value="CYCLIN-DEPENDENT KINASE 14"/>
    <property type="match status" value="1"/>
</dbReference>
<dbReference type="Pfam" id="PF00069">
    <property type="entry name" value="Pkinase"/>
    <property type="match status" value="1"/>
</dbReference>
<dbReference type="SMART" id="SM00220">
    <property type="entry name" value="S_TKc"/>
    <property type="match status" value="1"/>
</dbReference>
<dbReference type="SUPFAM" id="SSF56112">
    <property type="entry name" value="Protein kinase-like (PK-like)"/>
    <property type="match status" value="1"/>
</dbReference>
<dbReference type="PROSITE" id="PS00107">
    <property type="entry name" value="PROTEIN_KINASE_ATP"/>
    <property type="match status" value="1"/>
</dbReference>
<dbReference type="PROSITE" id="PS50011">
    <property type="entry name" value="PROTEIN_KINASE_DOM"/>
    <property type="match status" value="1"/>
</dbReference>
<dbReference type="PROSITE" id="PS00108">
    <property type="entry name" value="PROTEIN_KINASE_ST"/>
    <property type="match status" value="1"/>
</dbReference>
<sequence length="468" mass="52957">MCDLIEPQPAEKIGKMKKLRRTLSESFSRIALKKEDTTFDEICVTKMSTRNCQGMDSVIKPLDTIPEDKVRVQRTQSTFDPFEKPTNQVKRVHSENNACINFKTSSAGKESPKVRRHSSPSSPTSPKFGKADSYEKLEKLGEGSYATVYKGKSKVNGKLVALKVIRLQEEEGTPFTAIREASLLKGLKHANIVLLHDIIHTKETLTLVFEYVHTDLCQYMDKHPGGLHPENVKLFLFQLLRGLSYIHQRYILHRDLKPQNLLISDTGELKLADFGLARAKSVPSHTYSNEVVTLWYRPPDVLLGSTEYSTCLDMWGVGCIFVEMIQGVAAFPGMKDIQDQLERIFLVLGTPNEDTWPGVHSLPHFKPERFTLYSSKNLRQAWNKLSYVNHAEDLASKLLQCSPKNRLSAQAALSHEYFSDLPPRLWELTDMSSIFTVPNVRLQPEAGESMRAFGKNNSYGKSLSNSKH</sequence>
<proteinExistence type="inferred from homology"/>
<accession>C0RW22</accession>